<reference key="1">
    <citation type="journal article" date="2000" name="Nature">
        <title>Sequence and analysis of chromosome 3 of the plant Arabidopsis thaliana.</title>
        <authorList>
            <person name="Salanoubat M."/>
            <person name="Lemcke K."/>
            <person name="Rieger M."/>
            <person name="Ansorge W."/>
            <person name="Unseld M."/>
            <person name="Fartmann B."/>
            <person name="Valle G."/>
            <person name="Bloecker H."/>
            <person name="Perez-Alonso M."/>
            <person name="Obermaier B."/>
            <person name="Delseny M."/>
            <person name="Boutry M."/>
            <person name="Grivell L.A."/>
            <person name="Mache R."/>
            <person name="Puigdomenech P."/>
            <person name="De Simone V."/>
            <person name="Choisne N."/>
            <person name="Artiguenave F."/>
            <person name="Robert C."/>
            <person name="Brottier P."/>
            <person name="Wincker P."/>
            <person name="Cattolico L."/>
            <person name="Weissenbach J."/>
            <person name="Saurin W."/>
            <person name="Quetier F."/>
            <person name="Schaefer M."/>
            <person name="Mueller-Auer S."/>
            <person name="Gabel C."/>
            <person name="Fuchs M."/>
            <person name="Benes V."/>
            <person name="Wurmbach E."/>
            <person name="Drzonek H."/>
            <person name="Erfle H."/>
            <person name="Jordan N."/>
            <person name="Bangert S."/>
            <person name="Wiedelmann R."/>
            <person name="Kranz H."/>
            <person name="Voss H."/>
            <person name="Holland R."/>
            <person name="Brandt P."/>
            <person name="Nyakatura G."/>
            <person name="Vezzi A."/>
            <person name="D'Angelo M."/>
            <person name="Pallavicini A."/>
            <person name="Toppo S."/>
            <person name="Simionati B."/>
            <person name="Conrad A."/>
            <person name="Hornischer K."/>
            <person name="Kauer G."/>
            <person name="Loehnert T.-H."/>
            <person name="Nordsiek G."/>
            <person name="Reichelt J."/>
            <person name="Scharfe M."/>
            <person name="Schoen O."/>
            <person name="Bargues M."/>
            <person name="Terol J."/>
            <person name="Climent J."/>
            <person name="Navarro P."/>
            <person name="Collado C."/>
            <person name="Perez-Perez A."/>
            <person name="Ottenwaelder B."/>
            <person name="Duchemin D."/>
            <person name="Cooke R."/>
            <person name="Laudie M."/>
            <person name="Berger-Llauro C."/>
            <person name="Purnelle B."/>
            <person name="Masuy D."/>
            <person name="de Haan M."/>
            <person name="Maarse A.C."/>
            <person name="Alcaraz J.-P."/>
            <person name="Cottet A."/>
            <person name="Casacuberta E."/>
            <person name="Monfort A."/>
            <person name="Argiriou A."/>
            <person name="Flores M."/>
            <person name="Liguori R."/>
            <person name="Vitale D."/>
            <person name="Mannhaupt G."/>
            <person name="Haase D."/>
            <person name="Schoof H."/>
            <person name="Rudd S."/>
            <person name="Zaccaria P."/>
            <person name="Mewes H.-W."/>
            <person name="Mayer K.F.X."/>
            <person name="Kaul S."/>
            <person name="Town C.D."/>
            <person name="Koo H.L."/>
            <person name="Tallon L.J."/>
            <person name="Jenkins J."/>
            <person name="Rooney T."/>
            <person name="Rizzo M."/>
            <person name="Walts A."/>
            <person name="Utterback T."/>
            <person name="Fujii C.Y."/>
            <person name="Shea T.P."/>
            <person name="Creasy T.H."/>
            <person name="Haas B."/>
            <person name="Maiti R."/>
            <person name="Wu D."/>
            <person name="Peterson J."/>
            <person name="Van Aken S."/>
            <person name="Pai G."/>
            <person name="Militscher J."/>
            <person name="Sellers P."/>
            <person name="Gill J.E."/>
            <person name="Feldblyum T.V."/>
            <person name="Preuss D."/>
            <person name="Lin X."/>
            <person name="Nierman W.C."/>
            <person name="Salzberg S.L."/>
            <person name="White O."/>
            <person name="Venter J.C."/>
            <person name="Fraser C.M."/>
            <person name="Kaneko T."/>
            <person name="Nakamura Y."/>
            <person name="Sato S."/>
            <person name="Kato T."/>
            <person name="Asamizu E."/>
            <person name="Sasamoto S."/>
            <person name="Kimura T."/>
            <person name="Idesawa K."/>
            <person name="Kawashima K."/>
            <person name="Kishida Y."/>
            <person name="Kiyokawa C."/>
            <person name="Kohara M."/>
            <person name="Matsumoto M."/>
            <person name="Matsuno A."/>
            <person name="Muraki A."/>
            <person name="Nakayama S."/>
            <person name="Nakazaki N."/>
            <person name="Shinpo S."/>
            <person name="Takeuchi C."/>
            <person name="Wada T."/>
            <person name="Watanabe A."/>
            <person name="Yamada M."/>
            <person name="Yasuda M."/>
            <person name="Tabata S."/>
        </authorList>
    </citation>
    <scope>NUCLEOTIDE SEQUENCE [LARGE SCALE GENOMIC DNA]</scope>
    <source>
        <strain>cv. Columbia</strain>
    </source>
</reference>
<reference key="2">
    <citation type="journal article" date="2017" name="Plant J.">
        <title>Araport11: a complete reannotation of the Arabidopsis thaliana reference genome.</title>
        <authorList>
            <person name="Cheng C.Y."/>
            <person name="Krishnakumar V."/>
            <person name="Chan A.P."/>
            <person name="Thibaud-Nissen F."/>
            <person name="Schobel S."/>
            <person name="Town C.D."/>
        </authorList>
    </citation>
    <scope>GENOME REANNOTATION</scope>
    <source>
        <strain>cv. Columbia</strain>
    </source>
</reference>
<reference key="3">
    <citation type="journal article" date="2003" name="Science">
        <title>Empirical analysis of transcriptional activity in the Arabidopsis genome.</title>
        <authorList>
            <person name="Yamada K."/>
            <person name="Lim J."/>
            <person name="Dale J.M."/>
            <person name="Chen H."/>
            <person name="Shinn P."/>
            <person name="Palm C.J."/>
            <person name="Southwick A.M."/>
            <person name="Wu H.C."/>
            <person name="Kim C.J."/>
            <person name="Nguyen M."/>
            <person name="Pham P.K."/>
            <person name="Cheuk R.F."/>
            <person name="Karlin-Newmann G."/>
            <person name="Liu S.X."/>
            <person name="Lam B."/>
            <person name="Sakano H."/>
            <person name="Wu T."/>
            <person name="Yu G."/>
            <person name="Miranda M."/>
            <person name="Quach H.L."/>
            <person name="Tripp M."/>
            <person name="Chang C.H."/>
            <person name="Lee J.M."/>
            <person name="Toriumi M.J."/>
            <person name="Chan M.M."/>
            <person name="Tang C.C."/>
            <person name="Onodera C.S."/>
            <person name="Deng J.M."/>
            <person name="Akiyama K."/>
            <person name="Ansari Y."/>
            <person name="Arakawa T."/>
            <person name="Banh J."/>
            <person name="Banno F."/>
            <person name="Bowser L."/>
            <person name="Brooks S.Y."/>
            <person name="Carninci P."/>
            <person name="Chao Q."/>
            <person name="Choy N."/>
            <person name="Enju A."/>
            <person name="Goldsmith A.D."/>
            <person name="Gurjal M."/>
            <person name="Hansen N.F."/>
            <person name="Hayashizaki Y."/>
            <person name="Johnson-Hopson C."/>
            <person name="Hsuan V.W."/>
            <person name="Iida K."/>
            <person name="Karnes M."/>
            <person name="Khan S."/>
            <person name="Koesema E."/>
            <person name="Ishida J."/>
            <person name="Jiang P.X."/>
            <person name="Jones T."/>
            <person name="Kawai J."/>
            <person name="Kamiya A."/>
            <person name="Meyers C."/>
            <person name="Nakajima M."/>
            <person name="Narusaka M."/>
            <person name="Seki M."/>
            <person name="Sakurai T."/>
            <person name="Satou M."/>
            <person name="Tamse R."/>
            <person name="Vaysberg M."/>
            <person name="Wallender E.K."/>
            <person name="Wong C."/>
            <person name="Yamamura Y."/>
            <person name="Yuan S."/>
            <person name="Shinozaki K."/>
            <person name="Davis R.W."/>
            <person name="Theologis A."/>
            <person name="Ecker J.R."/>
        </authorList>
    </citation>
    <scope>NUCLEOTIDE SEQUENCE [LARGE SCALE MRNA]</scope>
    <source>
        <strain>cv. Columbia</strain>
    </source>
</reference>
<reference key="4">
    <citation type="journal article" date="2002" name="Plant Cell">
        <title>A tumor suppressor homolog, AtPTEN1, is essential for pollen development in Arabidopsis.</title>
        <authorList>
            <person name="Gupta R."/>
            <person name="Ting J.T.L."/>
            <person name="Sokolov L.N."/>
            <person name="Johnson S.A."/>
            <person name="Luan S."/>
        </authorList>
    </citation>
    <scope>NOMENCLATURE</scope>
</reference>
<reference key="5">
    <citation type="journal article" date="2012" name="Biochem. J.">
        <title>A novel class of PTEN protein in Arabidopsis displays unusual phosphoinositide phosphatase activity and efficiently binds phosphatidic acid.</title>
        <authorList>
            <person name="Pribat A."/>
            <person name="Sormani R."/>
            <person name="Rousseau-Gueutin M."/>
            <person name="Julkowska M.M."/>
            <person name="Testerink C."/>
            <person name="Joubes J."/>
            <person name="Castroviejo M."/>
            <person name="Laguerre M."/>
            <person name="Meyer C."/>
            <person name="Germain V."/>
            <person name="Rothan C."/>
        </authorList>
    </citation>
    <scope>FUNCTION</scope>
    <scope>TISSUE SPECIFICITY</scope>
    <scope>INDUCTION BY SALT AND OSMOTIC STRESSES</scope>
    <scope>GENE FAMILY</scope>
    <scope>NOMENCLATURE</scope>
</reference>
<sequence>METDPANSSSKSPAVVSEKDVLIPEPSENTVGVVQDPVSAEREAHEDSISTEASVAKVDDTQMPASSTGSEPLSKTDDIVPCPPGSSPRESPPSIFSSSGLSSWAKSFKFQQQDPNRTDSGMSAFTRFTSELGLHLPTKGSEEVGDSRSSNTQVGGAFESLTKAVVDSSRGAVKAMQVKARHIVSQNKRRYQEGEFDLDMTYITENIIAMGFPAGDISSGLFGFFEGLYRNHMEEVIKFFETHHKDKYKVYNLCSERLYDASRFEGKVASFPFDDHNCPPIQLIPSFCQSAYTWLKEDIQNVVVVHCKAGMARTGLMICCLLLYLKFFPTAEEAIDYYNQKRCLDGKALVLPSQIRYVKYYERVQNQFDGKVPPERRCMLRGFRLINCPYWIRPAITISNHTDILFSTKKHQKTKDLGPEDFWIKAPKKGVVVFAIPGEAGLTELAGDFKIHFQDSDGDFYCWLNTTLTDNRTMLKGSDFDGFDKRKLPAPGFHVEIVMIEPDNSQPTKSKSDSTQQQSQSSSSADSSKLKSNEKDDDVFSDSDGEEEGNSQSYSTNEKTASSMHTTSKPHQINEPPKRDDPSANRSVTSSSSSGHYNPIPNNSLAVSDIKAIAADASVFSFGDEEEDYESD</sequence>
<organism evidence="12">
    <name type="scientific">Arabidopsis thaliana</name>
    <name type="common">Mouse-ear cress</name>
    <dbReference type="NCBI Taxonomy" id="3702"/>
    <lineage>
        <taxon>Eukaryota</taxon>
        <taxon>Viridiplantae</taxon>
        <taxon>Streptophyta</taxon>
        <taxon>Embryophyta</taxon>
        <taxon>Tracheophyta</taxon>
        <taxon>Spermatophyta</taxon>
        <taxon>Magnoliopsida</taxon>
        <taxon>eudicotyledons</taxon>
        <taxon>Gunneridae</taxon>
        <taxon>Pentapetalae</taxon>
        <taxon>rosids</taxon>
        <taxon>malvids</taxon>
        <taxon>Brassicales</taxon>
        <taxon>Brassicaceae</taxon>
        <taxon>Camelineae</taxon>
        <taxon>Arabidopsis</taxon>
    </lineage>
</organism>
<gene>
    <name evidence="8" type="primary">PTEN2B</name>
    <name evidence="7" type="synonym">PTEN3</name>
    <name evidence="11" type="ordered locus">At3g50110</name>
    <name evidence="13" type="ORF">F3A4.190</name>
</gene>
<keyword id="KW-0378">Hydrolase</keyword>
<keyword id="KW-0443">Lipid metabolism</keyword>
<keyword id="KW-1208">Phospholipid metabolism</keyword>
<keyword id="KW-0597">Phosphoprotein</keyword>
<keyword id="KW-0904">Protein phosphatase</keyword>
<keyword id="KW-1185">Reference proteome</keyword>
<name>PTN2B_ARATH</name>
<feature type="chain" id="PRO_0000435169" description="Phosphatidylinositol 3,4,5-trisphosphate 3-phosphatase and protein-tyrosine-phosphatase PTEN2B">
    <location>
        <begin position="1"/>
        <end position="632"/>
    </location>
</feature>
<feature type="domain" description="Phosphatase tensin-type" evidence="3">
    <location>
        <begin position="189"/>
        <end position="368"/>
    </location>
</feature>
<feature type="domain" description="C2 tensin-type" evidence="2">
    <location>
        <begin position="375"/>
        <end position="502"/>
    </location>
</feature>
<feature type="region of interest" description="Disordered" evidence="5">
    <location>
        <begin position="1"/>
        <end position="98"/>
    </location>
</feature>
<feature type="region of interest" description="Disordered" evidence="5">
    <location>
        <begin position="504"/>
        <end position="603"/>
    </location>
</feature>
<feature type="compositionally biased region" description="Polar residues" evidence="5">
    <location>
        <begin position="1"/>
        <end position="12"/>
    </location>
</feature>
<feature type="compositionally biased region" description="Basic and acidic residues" evidence="5">
    <location>
        <begin position="39"/>
        <end position="48"/>
    </location>
</feature>
<feature type="compositionally biased region" description="Polar residues" evidence="5">
    <location>
        <begin position="63"/>
        <end position="73"/>
    </location>
</feature>
<feature type="compositionally biased region" description="Low complexity" evidence="5">
    <location>
        <begin position="87"/>
        <end position="98"/>
    </location>
</feature>
<feature type="compositionally biased region" description="Low complexity" evidence="5">
    <location>
        <begin position="505"/>
        <end position="527"/>
    </location>
</feature>
<feature type="compositionally biased region" description="Acidic residues" evidence="5">
    <location>
        <begin position="535"/>
        <end position="549"/>
    </location>
</feature>
<feature type="compositionally biased region" description="Polar residues" evidence="5">
    <location>
        <begin position="550"/>
        <end position="571"/>
    </location>
</feature>
<feature type="compositionally biased region" description="Low complexity" evidence="5">
    <location>
        <begin position="584"/>
        <end position="594"/>
    </location>
</feature>
<feature type="active site" description="Phosphocysteine intermediate" evidence="3">
    <location>
        <position position="307"/>
    </location>
</feature>
<feature type="modified residue" description="Phosphoserine" evidence="1">
    <location>
        <position position="541"/>
    </location>
</feature>
<feature type="sequence conflict" description="In Ref. 1; CAB62119." evidence="9" ref="1">
    <location>
        <begin position="377"/>
        <end position="380"/>
    </location>
</feature>
<accession>Q8H106</accession>
<accession>Q9SN07</accession>
<evidence type="ECO:0000250" key="1">
    <source>
        <dbReference type="UniProtKB" id="Q9LT75"/>
    </source>
</evidence>
<evidence type="ECO:0000255" key="2">
    <source>
        <dbReference type="PROSITE-ProRule" id="PRU00589"/>
    </source>
</evidence>
<evidence type="ECO:0000255" key="3">
    <source>
        <dbReference type="PROSITE-ProRule" id="PRU00590"/>
    </source>
</evidence>
<evidence type="ECO:0000255" key="4">
    <source>
        <dbReference type="PROSITE-ProRule" id="PRU10044"/>
    </source>
</evidence>
<evidence type="ECO:0000256" key="5">
    <source>
        <dbReference type="SAM" id="MobiDB-lite"/>
    </source>
</evidence>
<evidence type="ECO:0000269" key="6">
    <source>
    </source>
</evidence>
<evidence type="ECO:0000303" key="7">
    <source>
    </source>
</evidence>
<evidence type="ECO:0000303" key="8">
    <source>
    </source>
</evidence>
<evidence type="ECO:0000305" key="9"/>
<evidence type="ECO:0000305" key="10">
    <source>
    </source>
</evidence>
<evidence type="ECO:0000312" key="11">
    <source>
        <dbReference type="Araport" id="AT3G50110"/>
    </source>
</evidence>
<evidence type="ECO:0000312" key="12">
    <source>
        <dbReference type="EMBL" id="AAN41331.1"/>
    </source>
</evidence>
<evidence type="ECO:0000312" key="13">
    <source>
        <dbReference type="EMBL" id="CAB62119.1"/>
    </source>
</evidence>
<comment type="function">
    <text evidence="6">Protein tyrosine phosphatase that also exhibits a weak lipid phosphatase activity towards PtdIns(3)P.</text>
</comment>
<comment type="catalytic activity">
    <reaction evidence="4">
        <text>O-phospho-L-tyrosyl-[protein] + H2O = L-tyrosyl-[protein] + phosphate</text>
        <dbReference type="Rhea" id="RHEA:10684"/>
        <dbReference type="Rhea" id="RHEA-COMP:10136"/>
        <dbReference type="Rhea" id="RHEA-COMP:20101"/>
        <dbReference type="ChEBI" id="CHEBI:15377"/>
        <dbReference type="ChEBI" id="CHEBI:43474"/>
        <dbReference type="ChEBI" id="CHEBI:46858"/>
        <dbReference type="ChEBI" id="CHEBI:61978"/>
        <dbReference type="EC" id="3.1.3.48"/>
    </reaction>
</comment>
<comment type="catalytic activity">
    <reaction>
        <text>a 1,2-diacyl-sn-glycero-3-phospho-(1D-myo-inositol-3,4,5-trisphosphate) + H2O = a 1,2-diacyl-sn-glycero-3-phospho-(1D-myo-inositol-4,5-bisphosphate) + phosphate</text>
        <dbReference type="Rhea" id="RHEA:25017"/>
        <dbReference type="ChEBI" id="CHEBI:15377"/>
        <dbReference type="ChEBI" id="CHEBI:43474"/>
        <dbReference type="ChEBI" id="CHEBI:57836"/>
        <dbReference type="ChEBI" id="CHEBI:58456"/>
        <dbReference type="EC" id="3.1.3.67"/>
    </reaction>
</comment>
<comment type="tissue specificity">
    <text evidence="6">Expressed, at low levels, in seedlings, roots, stems, leaves, flowers and siliques. However, at protein level, not observed in older leaves, flowers and siliques.</text>
</comment>
<comment type="induction">
    <text evidence="6">Accumulates in response to salt (e.g. NaCl) and osmotic stresses (e.g. mannitol).</text>
</comment>
<comment type="similarity">
    <text evidence="10">Belongs to the PTEN phosphatase protein family.</text>
</comment>
<dbReference type="EC" id="3.1.3.48" evidence="4 6"/>
<dbReference type="EC" id="3.1.3.67" evidence="6"/>
<dbReference type="EMBL" id="AL132978">
    <property type="protein sequence ID" value="CAB62119.1"/>
    <property type="molecule type" value="Genomic_DNA"/>
</dbReference>
<dbReference type="EMBL" id="CP002686">
    <property type="protein sequence ID" value="AEE78627.1"/>
    <property type="molecule type" value="Genomic_DNA"/>
</dbReference>
<dbReference type="EMBL" id="BT000931">
    <property type="protein sequence ID" value="AAN41331.1"/>
    <property type="molecule type" value="mRNA"/>
</dbReference>
<dbReference type="PIR" id="T45864">
    <property type="entry name" value="T45864"/>
</dbReference>
<dbReference type="SMR" id="Q8H106"/>
<dbReference type="FunCoup" id="Q8H106">
    <property type="interactions" value="150"/>
</dbReference>
<dbReference type="IntAct" id="Q8H106">
    <property type="interactions" value="4"/>
</dbReference>
<dbReference type="STRING" id="3702.Q8H106"/>
<dbReference type="iPTMnet" id="Q8H106"/>
<dbReference type="PaxDb" id="3702-AT3G50110.1"/>
<dbReference type="ProteomicsDB" id="224830"/>
<dbReference type="EnsemblPlants" id="AT3G50110.1">
    <property type="protein sequence ID" value="AT3G50110.1"/>
    <property type="gene ID" value="AT3G50110"/>
</dbReference>
<dbReference type="GeneID" id="824173"/>
<dbReference type="Gramene" id="AT3G50110.1">
    <property type="protein sequence ID" value="AT3G50110.1"/>
    <property type="gene ID" value="AT3G50110"/>
</dbReference>
<dbReference type="KEGG" id="ath:AT3G50110"/>
<dbReference type="Araport" id="AT3G50110"/>
<dbReference type="TAIR" id="AT3G50110">
    <property type="gene designation" value="PEN3"/>
</dbReference>
<dbReference type="eggNOG" id="KOG2283">
    <property type="taxonomic scope" value="Eukaryota"/>
</dbReference>
<dbReference type="HOGENOM" id="CLU_021394_1_0_1"/>
<dbReference type="InParanoid" id="Q8H106"/>
<dbReference type="OMA" id="HQINEPP"/>
<dbReference type="PhylomeDB" id="Q8H106"/>
<dbReference type="BioCyc" id="ARA:AT3G50110-MONOMER"/>
<dbReference type="PRO" id="PR:Q8H106"/>
<dbReference type="Proteomes" id="UP000006548">
    <property type="component" value="Chromosome 3"/>
</dbReference>
<dbReference type="ExpressionAtlas" id="Q8H106">
    <property type="expression patterns" value="baseline and differential"/>
</dbReference>
<dbReference type="GO" id="GO:0052866">
    <property type="term" value="F:phosphatidylinositol phosphate phosphatase activity"/>
    <property type="evidence" value="ECO:0000314"/>
    <property type="project" value="UniProtKB"/>
</dbReference>
<dbReference type="GO" id="GO:0016314">
    <property type="term" value="F:phosphatidylinositol-3,4,5-trisphosphate 3-phosphatase activity"/>
    <property type="evidence" value="ECO:0007669"/>
    <property type="project" value="UniProtKB-EC"/>
</dbReference>
<dbReference type="GO" id="GO:0004725">
    <property type="term" value="F:protein tyrosine phosphatase activity"/>
    <property type="evidence" value="ECO:0000250"/>
    <property type="project" value="UniProtKB"/>
</dbReference>
<dbReference type="GO" id="GO:0006629">
    <property type="term" value="P:lipid metabolic process"/>
    <property type="evidence" value="ECO:0007669"/>
    <property type="project" value="UniProtKB-KW"/>
</dbReference>
<dbReference type="GO" id="GO:0006970">
    <property type="term" value="P:response to osmotic stress"/>
    <property type="evidence" value="ECO:0000270"/>
    <property type="project" value="UniProtKB"/>
</dbReference>
<dbReference type="GO" id="GO:0009651">
    <property type="term" value="P:response to salt stress"/>
    <property type="evidence" value="ECO:0000270"/>
    <property type="project" value="UniProtKB"/>
</dbReference>
<dbReference type="CDD" id="cd14509">
    <property type="entry name" value="PTP_PTEN"/>
    <property type="match status" value="1"/>
</dbReference>
<dbReference type="FunFam" id="3.90.190.10:FF:000053">
    <property type="entry name" value="Phosphatidylinositol 3,4,5-trisphosphate 3-phosphatase TPTE2"/>
    <property type="match status" value="1"/>
</dbReference>
<dbReference type="Gene3D" id="3.90.190.10">
    <property type="entry name" value="Protein tyrosine phosphatase superfamily"/>
    <property type="match status" value="1"/>
</dbReference>
<dbReference type="InterPro" id="IPR051281">
    <property type="entry name" value="Dual-spec_lipid-protein_phosph"/>
</dbReference>
<dbReference type="InterPro" id="IPR029021">
    <property type="entry name" value="Prot-tyrosine_phosphatase-like"/>
</dbReference>
<dbReference type="InterPro" id="IPR055183">
    <property type="entry name" value="PTEN2A/B_C2"/>
</dbReference>
<dbReference type="InterPro" id="IPR045101">
    <property type="entry name" value="PTP_PTEN"/>
</dbReference>
<dbReference type="InterPro" id="IPR014020">
    <property type="entry name" value="Tensin_C2-dom"/>
</dbReference>
<dbReference type="InterPro" id="IPR029023">
    <property type="entry name" value="Tensin_phosphatase"/>
</dbReference>
<dbReference type="InterPro" id="IPR016130">
    <property type="entry name" value="Tyr_Pase_AS"/>
</dbReference>
<dbReference type="InterPro" id="IPR000387">
    <property type="entry name" value="Tyr_Pase_dom"/>
</dbReference>
<dbReference type="PANTHER" id="PTHR12305">
    <property type="entry name" value="PHOSPHATASE WITH HOMOLOGY TO TENSIN"/>
    <property type="match status" value="1"/>
</dbReference>
<dbReference type="PANTHER" id="PTHR12305:SF87">
    <property type="entry name" value="PHOSPHATIDYLINOSITOL 3,4,5-TRISPHOSPHATE 3-PHOSPHATASE AND PROTEIN-TYROSINE-PHOSPHATASE PTEN2B"/>
    <property type="match status" value="1"/>
</dbReference>
<dbReference type="Pfam" id="PF22918">
    <property type="entry name" value="PTEN2_C2"/>
    <property type="match status" value="1"/>
</dbReference>
<dbReference type="Pfam" id="PF22785">
    <property type="entry name" value="Tc-R-P"/>
    <property type="match status" value="1"/>
</dbReference>
<dbReference type="SMART" id="SM01326">
    <property type="entry name" value="PTEN_C2"/>
    <property type="match status" value="1"/>
</dbReference>
<dbReference type="SUPFAM" id="SSF52799">
    <property type="entry name" value="(Phosphotyrosine protein) phosphatases II"/>
    <property type="match status" value="1"/>
</dbReference>
<dbReference type="PROSITE" id="PS51182">
    <property type="entry name" value="C2_TENSIN"/>
    <property type="match status" value="1"/>
</dbReference>
<dbReference type="PROSITE" id="PS51181">
    <property type="entry name" value="PPASE_TENSIN"/>
    <property type="match status" value="1"/>
</dbReference>
<dbReference type="PROSITE" id="PS00383">
    <property type="entry name" value="TYR_PHOSPHATASE_1"/>
    <property type="match status" value="1"/>
</dbReference>
<dbReference type="PROSITE" id="PS50056">
    <property type="entry name" value="TYR_PHOSPHATASE_2"/>
    <property type="match status" value="1"/>
</dbReference>
<protein>
    <recommendedName>
        <fullName evidence="9">Phosphatidylinositol 3,4,5-trisphosphate 3-phosphatase and protein-tyrosine-phosphatase PTEN2B</fullName>
        <ecNumber evidence="4 6">3.1.3.48</ecNumber>
        <ecNumber evidence="6">3.1.3.67</ecNumber>
    </recommendedName>
    <alternativeName>
        <fullName evidence="8">Protein PHOSPHATASE AND TENSIN HOMOLOG 2-b</fullName>
        <shortName evidence="8">AtPTEN2b</shortName>
        <shortName evidence="7">AtPTEN3</shortName>
    </alternativeName>
</protein>
<proteinExistence type="evidence at transcript level"/>